<gene>
    <name evidence="1" type="primary">priB</name>
    <name type="ordered locus">HSM_0605</name>
</gene>
<dbReference type="EMBL" id="CP000947">
    <property type="protein sequence ID" value="ACA32258.1"/>
    <property type="molecule type" value="Genomic_DNA"/>
</dbReference>
<dbReference type="RefSeq" id="WP_012341432.1">
    <property type="nucleotide sequence ID" value="NC_010519.1"/>
</dbReference>
<dbReference type="SMR" id="B0US44"/>
<dbReference type="STRING" id="228400.HSM_0605"/>
<dbReference type="GeneID" id="31486887"/>
<dbReference type="KEGG" id="hsm:HSM_0605"/>
<dbReference type="HOGENOM" id="CLU_166075_0_0_6"/>
<dbReference type="GO" id="GO:1990077">
    <property type="term" value="C:primosome complex"/>
    <property type="evidence" value="ECO:0007669"/>
    <property type="project" value="UniProtKB-KW"/>
</dbReference>
<dbReference type="GO" id="GO:0003697">
    <property type="term" value="F:single-stranded DNA binding"/>
    <property type="evidence" value="ECO:0007669"/>
    <property type="project" value="UniProtKB-UniRule"/>
</dbReference>
<dbReference type="GO" id="GO:0006269">
    <property type="term" value="P:DNA replication, synthesis of primer"/>
    <property type="evidence" value="ECO:0007669"/>
    <property type="project" value="UniProtKB-KW"/>
</dbReference>
<dbReference type="Gene3D" id="2.40.50.140">
    <property type="entry name" value="Nucleic acid-binding proteins"/>
    <property type="match status" value="1"/>
</dbReference>
<dbReference type="HAMAP" id="MF_00720">
    <property type="entry name" value="PriB"/>
    <property type="match status" value="1"/>
</dbReference>
<dbReference type="InterPro" id="IPR012340">
    <property type="entry name" value="NA-bd_OB-fold"/>
</dbReference>
<dbReference type="InterPro" id="IPR000424">
    <property type="entry name" value="Primosome_PriB/ssb"/>
</dbReference>
<dbReference type="InterPro" id="IPR023646">
    <property type="entry name" value="Prisomal_replication_PriB"/>
</dbReference>
<dbReference type="NCBIfam" id="TIGR04418">
    <property type="entry name" value="PriB_gamma"/>
    <property type="match status" value="1"/>
</dbReference>
<dbReference type="Pfam" id="PF22657">
    <property type="entry name" value="SSB_1"/>
    <property type="match status" value="1"/>
</dbReference>
<dbReference type="PIRSF" id="PIRSF003135">
    <property type="entry name" value="Primosomal_n"/>
    <property type="match status" value="1"/>
</dbReference>
<dbReference type="SUPFAM" id="SSF50249">
    <property type="entry name" value="Nucleic acid-binding proteins"/>
    <property type="match status" value="1"/>
</dbReference>
<dbReference type="PROSITE" id="PS50935">
    <property type="entry name" value="SSB"/>
    <property type="match status" value="1"/>
</dbReference>
<organism>
    <name type="scientific">Histophilus somni (strain 2336)</name>
    <name type="common">Haemophilus somnus</name>
    <dbReference type="NCBI Taxonomy" id="228400"/>
    <lineage>
        <taxon>Bacteria</taxon>
        <taxon>Pseudomonadati</taxon>
        <taxon>Pseudomonadota</taxon>
        <taxon>Gammaproteobacteria</taxon>
        <taxon>Pasteurellales</taxon>
        <taxon>Pasteurellaceae</taxon>
        <taxon>Histophilus</taxon>
    </lineage>
</organism>
<name>PRIB_HISS2</name>
<evidence type="ECO:0000255" key="1">
    <source>
        <dbReference type="HAMAP-Rule" id="MF_00720"/>
    </source>
</evidence>
<sequence>MLKSNLEVDNRFSLIGKVADFPKRNKSPSGIDHCLFYLEHRSNKKEAGFTRQAWCKIAIQISGNQLIEKTQSITVGQQLLVVGFVTSHRSSNGLNQLILHAEQIEFIE</sequence>
<comment type="function">
    <text evidence="1">Involved in the restart of stalled replication forks, which reloads the replicative helicase on sites other than the origin of replication; the PriA-PriB pathway is the major replication restart pathway. During primosome assembly it facilitates complex formation between PriA and DnaT on DNA; stabilizes PriA on DNA. Stimulates the DNA unwinding activity of PriA helicase.</text>
</comment>
<comment type="subunit">
    <text evidence="1">Homodimer. Interacts with PriA and DnaT. Component of the replication restart primosome. Primosome assembly occurs via a 'hand-off' mechanism. PriA binds to replication forks, subsequently PriB then DnaT bind; DnaT then displaces ssDNA to generate the helicase loading substrate.</text>
</comment>
<comment type="similarity">
    <text evidence="1">Belongs to the PriB family.</text>
</comment>
<feature type="chain" id="PRO_1000083284" description="Replication restart protein PriB">
    <location>
        <begin position="1"/>
        <end position="108"/>
    </location>
</feature>
<feature type="domain" description="SSB" evidence="1">
    <location>
        <begin position="8"/>
        <end position="108"/>
    </location>
</feature>
<proteinExistence type="inferred from homology"/>
<protein>
    <recommendedName>
        <fullName evidence="1">Replication restart protein PriB</fullName>
    </recommendedName>
</protein>
<keyword id="KW-0235">DNA replication</keyword>
<keyword id="KW-0238">DNA-binding</keyword>
<keyword id="KW-0639">Primosome</keyword>
<reference key="1">
    <citation type="submission" date="2008-02" db="EMBL/GenBank/DDBJ databases">
        <title>Complete sequence of Haemophilus somnus 2336.</title>
        <authorList>
            <consortium name="US DOE Joint Genome Institute"/>
            <person name="Siddaramappa S."/>
            <person name="Duncan A.J."/>
            <person name="Challacombe J.F."/>
            <person name="Rainey D."/>
            <person name="Gillaspy A.F."/>
            <person name="Carson M."/>
            <person name="Gipson J."/>
            <person name="Gipson M."/>
            <person name="Bruce D."/>
            <person name="Detter J.C."/>
            <person name="Han C.S."/>
            <person name="Land M."/>
            <person name="Tapia R."/>
            <person name="Thompson L.S."/>
            <person name="Orvis J."/>
            <person name="Zaitshik J."/>
            <person name="Barnes G."/>
            <person name="Brettin T.S."/>
            <person name="Dyer D.W."/>
            <person name="Inzana T.J."/>
        </authorList>
    </citation>
    <scope>NUCLEOTIDE SEQUENCE [LARGE SCALE GENOMIC DNA]</scope>
    <source>
        <strain>2336</strain>
    </source>
</reference>
<accession>B0US44</accession>